<gene>
    <name evidence="1" type="primary">fluC1</name>
    <name evidence="1" type="synonym">crcB1</name>
    <name type="ordered locus">PMT_0123</name>
</gene>
<keyword id="KW-0997">Cell inner membrane</keyword>
<keyword id="KW-1003">Cell membrane</keyword>
<keyword id="KW-0407">Ion channel</keyword>
<keyword id="KW-0406">Ion transport</keyword>
<keyword id="KW-0472">Membrane</keyword>
<keyword id="KW-0479">Metal-binding</keyword>
<keyword id="KW-1185">Reference proteome</keyword>
<keyword id="KW-0915">Sodium</keyword>
<keyword id="KW-0812">Transmembrane</keyword>
<keyword id="KW-1133">Transmembrane helix</keyword>
<keyword id="KW-0813">Transport</keyword>
<feature type="chain" id="PRO_0000110153" description="Fluoride-specific ion channel FluC 1">
    <location>
        <begin position="1"/>
        <end position="131"/>
    </location>
</feature>
<feature type="transmembrane region" description="Helical" evidence="1">
    <location>
        <begin position="4"/>
        <end position="24"/>
    </location>
</feature>
<feature type="transmembrane region" description="Helical" evidence="1">
    <location>
        <begin position="40"/>
        <end position="60"/>
    </location>
</feature>
<feature type="transmembrane region" description="Helical" evidence="1">
    <location>
        <begin position="73"/>
        <end position="93"/>
    </location>
</feature>
<feature type="transmembrane region" description="Helical" evidence="1">
    <location>
        <begin position="108"/>
        <end position="128"/>
    </location>
</feature>
<feature type="binding site" evidence="1">
    <location>
        <position position="83"/>
    </location>
    <ligand>
        <name>Na(+)</name>
        <dbReference type="ChEBI" id="CHEBI:29101"/>
        <note>structural</note>
    </ligand>
</feature>
<feature type="binding site" evidence="1">
    <location>
        <position position="86"/>
    </location>
    <ligand>
        <name>Na(+)</name>
        <dbReference type="ChEBI" id="CHEBI:29101"/>
        <note>structural</note>
    </ligand>
</feature>
<name>FLUC1_PROMM</name>
<sequence>MSDLALPAWQASLVAIGAVPGAWLRLRVVNHLEPMVPRKHWGTFAVNMVAAFALGLVLALQAKCAPESGASPLILLIGVGFFGSLSTFSTFAVEVLNTLREHRWSEALVLAVGSILGGLLAVAAGVGLANG</sequence>
<proteinExistence type="inferred from homology"/>
<organism>
    <name type="scientific">Prochlorococcus marinus (strain MIT 9313)</name>
    <dbReference type="NCBI Taxonomy" id="74547"/>
    <lineage>
        <taxon>Bacteria</taxon>
        <taxon>Bacillati</taxon>
        <taxon>Cyanobacteriota</taxon>
        <taxon>Cyanophyceae</taxon>
        <taxon>Synechococcales</taxon>
        <taxon>Prochlorococcaceae</taxon>
        <taxon>Prochlorococcus</taxon>
    </lineage>
</organism>
<evidence type="ECO:0000255" key="1">
    <source>
        <dbReference type="HAMAP-Rule" id="MF_00454"/>
    </source>
</evidence>
<comment type="function">
    <text evidence="1">Fluoride-specific ion channel. Important for reducing fluoride concentration in the cell, thus reducing its toxicity.</text>
</comment>
<comment type="catalytic activity">
    <reaction evidence="1">
        <text>fluoride(in) = fluoride(out)</text>
        <dbReference type="Rhea" id="RHEA:76159"/>
        <dbReference type="ChEBI" id="CHEBI:17051"/>
    </reaction>
    <physiologicalReaction direction="left-to-right" evidence="1">
        <dbReference type="Rhea" id="RHEA:76160"/>
    </physiologicalReaction>
</comment>
<comment type="activity regulation">
    <text evidence="1">Na(+) is not transported, but it plays an essential structural role and its presence is essential for fluoride channel function.</text>
</comment>
<comment type="subcellular location">
    <subcellularLocation>
        <location evidence="1">Cell inner membrane</location>
        <topology evidence="1">Multi-pass membrane protein</topology>
    </subcellularLocation>
</comment>
<comment type="similarity">
    <text evidence="1">Belongs to the fluoride channel Fluc/FEX (TC 1.A.43) family.</text>
</comment>
<accession>Q7V938</accession>
<reference key="1">
    <citation type="journal article" date="2003" name="Nature">
        <title>Genome divergence in two Prochlorococcus ecotypes reflects oceanic niche differentiation.</title>
        <authorList>
            <person name="Rocap G."/>
            <person name="Larimer F.W."/>
            <person name="Lamerdin J.E."/>
            <person name="Malfatti S."/>
            <person name="Chain P."/>
            <person name="Ahlgren N.A."/>
            <person name="Arellano A."/>
            <person name="Coleman M."/>
            <person name="Hauser L."/>
            <person name="Hess W.R."/>
            <person name="Johnson Z.I."/>
            <person name="Land M.L."/>
            <person name="Lindell D."/>
            <person name="Post A.F."/>
            <person name="Regala W."/>
            <person name="Shah M."/>
            <person name="Shaw S.L."/>
            <person name="Steglich C."/>
            <person name="Sullivan M.B."/>
            <person name="Ting C.S."/>
            <person name="Tolonen A."/>
            <person name="Webb E.A."/>
            <person name="Zinser E.R."/>
            <person name="Chisholm S.W."/>
        </authorList>
    </citation>
    <scope>NUCLEOTIDE SEQUENCE [LARGE SCALE GENOMIC DNA]</scope>
    <source>
        <strain>MIT 9313</strain>
    </source>
</reference>
<dbReference type="EMBL" id="BX548175">
    <property type="protein sequence ID" value="CAE20298.1"/>
    <property type="molecule type" value="Genomic_DNA"/>
</dbReference>
<dbReference type="SMR" id="Q7V938"/>
<dbReference type="KEGG" id="pmt:PMT_0123"/>
<dbReference type="eggNOG" id="COG0239">
    <property type="taxonomic scope" value="Bacteria"/>
</dbReference>
<dbReference type="HOGENOM" id="CLU_114342_2_3_3"/>
<dbReference type="OrthoDB" id="560684at2"/>
<dbReference type="Proteomes" id="UP000001423">
    <property type="component" value="Chromosome"/>
</dbReference>
<dbReference type="GO" id="GO:0005886">
    <property type="term" value="C:plasma membrane"/>
    <property type="evidence" value="ECO:0007669"/>
    <property type="project" value="UniProtKB-SubCell"/>
</dbReference>
<dbReference type="GO" id="GO:0062054">
    <property type="term" value="F:fluoride channel activity"/>
    <property type="evidence" value="ECO:0007669"/>
    <property type="project" value="UniProtKB-UniRule"/>
</dbReference>
<dbReference type="GO" id="GO:0046872">
    <property type="term" value="F:metal ion binding"/>
    <property type="evidence" value="ECO:0007669"/>
    <property type="project" value="UniProtKB-KW"/>
</dbReference>
<dbReference type="GO" id="GO:0140114">
    <property type="term" value="P:cellular detoxification of fluoride"/>
    <property type="evidence" value="ECO:0007669"/>
    <property type="project" value="UniProtKB-UniRule"/>
</dbReference>
<dbReference type="HAMAP" id="MF_00454">
    <property type="entry name" value="FluC"/>
    <property type="match status" value="1"/>
</dbReference>
<dbReference type="InterPro" id="IPR003691">
    <property type="entry name" value="FluC"/>
</dbReference>
<dbReference type="PANTHER" id="PTHR28259">
    <property type="entry name" value="FLUORIDE EXPORT PROTEIN 1-RELATED"/>
    <property type="match status" value="1"/>
</dbReference>
<dbReference type="PANTHER" id="PTHR28259:SF1">
    <property type="entry name" value="FLUORIDE EXPORT PROTEIN 1-RELATED"/>
    <property type="match status" value="1"/>
</dbReference>
<dbReference type="Pfam" id="PF02537">
    <property type="entry name" value="CRCB"/>
    <property type="match status" value="1"/>
</dbReference>
<protein>
    <recommendedName>
        <fullName evidence="1">Fluoride-specific ion channel FluC 1</fullName>
    </recommendedName>
</protein>